<keyword id="KW-0309">Germination</keyword>
<keyword id="KW-0749">Sporulation</keyword>
<accession>O68685</accession>
<sequence length="204" mass="24135">MNQDIYTYLHQLQQALQTQQAAILNLEDQVRQLQEELNELKNRPSSSVGKVEYKFDQLKVENLNGTLNIGLNPFSAKGQQIEDLQVDTETLKVNPETETNPDFYQGILQEMHRYLDEEAYNRILHFEQEERTPLDEMYRQMMVDDIKKQMEHRLPYYLSQAQSYEGISTDPDYLRDIIIQAMKQDIDKAFLSFIQHIPGNFRKE</sequence>
<proteinExistence type="evidence at protein level"/>
<comment type="function">
    <text>Required for the formation of functionally normal spores. Could be involved in the establishment of normal spore coat structure and/or permeability, which allows the access of germinants to their receptor.</text>
</comment>
<comment type="developmental stage">
    <text>Expressed during sporulation, around the time of spore coat synthesis and assembly, in mother cell compartment.</text>
</comment>
<comment type="induction">
    <text>Expression is sigma K-dependent and negatively regulated by GerE.</text>
</comment>
<dbReference type="EMBL" id="AF053927">
    <property type="protein sequence ID" value="AAC08014.1"/>
    <property type="molecule type" value="Genomic_DNA"/>
</dbReference>
<dbReference type="RefSeq" id="WP_001070762.1">
    <property type="nucleotide sequence ID" value="NZ_UFSU01000001.1"/>
</dbReference>
<dbReference type="SMR" id="O68685"/>
<dbReference type="eggNOG" id="ENOG5032VKI">
    <property type="taxonomic scope" value="Bacteria"/>
</dbReference>
<dbReference type="GO" id="GO:0030435">
    <property type="term" value="P:sporulation resulting in formation of a cellular spore"/>
    <property type="evidence" value="ECO:0007669"/>
    <property type="project" value="UniProtKB-KW"/>
</dbReference>
<dbReference type="InterPro" id="IPR019673">
    <property type="entry name" value="Spore_germination_GerPC"/>
</dbReference>
<dbReference type="Pfam" id="PF10737">
    <property type="entry name" value="GerPC"/>
    <property type="match status" value="1"/>
</dbReference>
<reference key="1">
    <citation type="journal article" date="2000" name="J. Bacteriol.">
        <title>Mutations in the gerP locus of Bacillus subtilis and Bacillus cereus affect access of germinants to their targets in spores.</title>
        <authorList>
            <person name="Behravan J."/>
            <person name="Chirakkal H."/>
            <person name="Masson A."/>
            <person name="Moir A."/>
        </authorList>
    </citation>
    <scope>NUCLEOTIDE SEQUENCE [GENOMIC DNA]</scope>
    <scope>CHARACTERIZATION</scope>
    <source>
        <strain>ATCC 10876 / DSM 9378 / NRRL B-569</strain>
    </source>
</reference>
<gene>
    <name type="primary">gerPC</name>
</gene>
<organism>
    <name type="scientific">Bacillus cereus</name>
    <dbReference type="NCBI Taxonomy" id="1396"/>
    <lineage>
        <taxon>Bacteria</taxon>
        <taxon>Bacillati</taxon>
        <taxon>Bacillota</taxon>
        <taxon>Bacilli</taxon>
        <taxon>Bacillales</taxon>
        <taxon>Bacillaceae</taxon>
        <taxon>Bacillus</taxon>
        <taxon>Bacillus cereus group</taxon>
    </lineage>
</organism>
<name>GERPC_BACCE</name>
<feature type="chain" id="PRO_0000087469" description="Probable spore germination protein GerPC">
    <location>
        <begin position="1"/>
        <end position="204"/>
    </location>
</feature>
<protein>
    <recommendedName>
        <fullName>Probable spore germination protein GerPC</fullName>
    </recommendedName>
</protein>